<protein>
    <recommendedName>
        <fullName>tRNA (guanine-N(1)-)-methyltransferase</fullName>
        <ecNumber>2.1.1.228</ecNumber>
    </recommendedName>
    <alternativeName>
        <fullName>M1G-methyltransferase</fullName>
    </alternativeName>
    <alternativeName>
        <fullName>tRNA [GM37] methyltransferase</fullName>
    </alternativeName>
</protein>
<dbReference type="EC" id="2.1.1.228"/>
<dbReference type="EMBL" id="AL009126">
    <property type="protein sequence ID" value="CAB13476.1"/>
    <property type="molecule type" value="Genomic_DNA"/>
</dbReference>
<dbReference type="PIR" id="F69725">
    <property type="entry name" value="F69725"/>
</dbReference>
<dbReference type="RefSeq" id="NP_389485.1">
    <property type="nucleotide sequence ID" value="NC_000964.3"/>
</dbReference>
<dbReference type="RefSeq" id="WP_009967234.1">
    <property type="nucleotide sequence ID" value="NZ_OZ025638.1"/>
</dbReference>
<dbReference type="SMR" id="O31741"/>
<dbReference type="FunCoup" id="O31741">
    <property type="interactions" value="540"/>
</dbReference>
<dbReference type="IntAct" id="O31741">
    <property type="interactions" value="1"/>
</dbReference>
<dbReference type="STRING" id="224308.BSU16030"/>
<dbReference type="PaxDb" id="224308-BSU16030"/>
<dbReference type="EnsemblBacteria" id="CAB13476">
    <property type="protein sequence ID" value="CAB13476"/>
    <property type="gene ID" value="BSU_16030"/>
</dbReference>
<dbReference type="GeneID" id="936650"/>
<dbReference type="KEGG" id="bsu:BSU16030"/>
<dbReference type="PATRIC" id="fig|224308.179.peg.1743"/>
<dbReference type="eggNOG" id="COG0336">
    <property type="taxonomic scope" value="Bacteria"/>
</dbReference>
<dbReference type="InParanoid" id="O31741"/>
<dbReference type="OrthoDB" id="9807416at2"/>
<dbReference type="PhylomeDB" id="O31741"/>
<dbReference type="BioCyc" id="BSUB:BSU16030-MONOMER"/>
<dbReference type="Proteomes" id="UP000001570">
    <property type="component" value="Chromosome"/>
</dbReference>
<dbReference type="GO" id="GO:0005829">
    <property type="term" value="C:cytosol"/>
    <property type="evidence" value="ECO:0000318"/>
    <property type="project" value="GO_Central"/>
</dbReference>
<dbReference type="GO" id="GO:0052906">
    <property type="term" value="F:tRNA (guanine(37)-N1)-methyltransferase activity"/>
    <property type="evidence" value="ECO:0000318"/>
    <property type="project" value="GO_Central"/>
</dbReference>
<dbReference type="GO" id="GO:0002939">
    <property type="term" value="P:tRNA N1-guanine methylation"/>
    <property type="evidence" value="ECO:0000318"/>
    <property type="project" value="GO_Central"/>
</dbReference>
<dbReference type="CDD" id="cd18080">
    <property type="entry name" value="TrmD-like"/>
    <property type="match status" value="1"/>
</dbReference>
<dbReference type="FunFam" id="1.10.1270.20:FF:000001">
    <property type="entry name" value="tRNA (guanine-N(1)-)-methyltransferase"/>
    <property type="match status" value="1"/>
</dbReference>
<dbReference type="FunFam" id="3.40.1280.10:FF:000001">
    <property type="entry name" value="tRNA (guanine-N(1)-)-methyltransferase"/>
    <property type="match status" value="1"/>
</dbReference>
<dbReference type="Gene3D" id="3.40.1280.10">
    <property type="match status" value="1"/>
</dbReference>
<dbReference type="Gene3D" id="1.10.1270.20">
    <property type="entry name" value="tRNA(m1g37)methyltransferase, domain 2"/>
    <property type="match status" value="1"/>
</dbReference>
<dbReference type="HAMAP" id="MF_00605">
    <property type="entry name" value="TrmD"/>
    <property type="match status" value="1"/>
</dbReference>
<dbReference type="InterPro" id="IPR029028">
    <property type="entry name" value="Alpha/beta_knot_MTases"/>
</dbReference>
<dbReference type="InterPro" id="IPR023148">
    <property type="entry name" value="tRNA_m1G_MeTrfase_C_sf"/>
</dbReference>
<dbReference type="InterPro" id="IPR002649">
    <property type="entry name" value="tRNA_m1G_MeTrfase_TrmD"/>
</dbReference>
<dbReference type="InterPro" id="IPR029026">
    <property type="entry name" value="tRNA_m1G_MTases_N"/>
</dbReference>
<dbReference type="InterPro" id="IPR016009">
    <property type="entry name" value="tRNA_MeTrfase_TRMD/TRM10"/>
</dbReference>
<dbReference type="NCBIfam" id="NF000648">
    <property type="entry name" value="PRK00026.1"/>
    <property type="match status" value="1"/>
</dbReference>
<dbReference type="NCBIfam" id="TIGR00088">
    <property type="entry name" value="trmD"/>
    <property type="match status" value="1"/>
</dbReference>
<dbReference type="PANTHER" id="PTHR46417">
    <property type="entry name" value="TRNA (GUANINE-N(1)-)-METHYLTRANSFERASE"/>
    <property type="match status" value="1"/>
</dbReference>
<dbReference type="PANTHER" id="PTHR46417:SF1">
    <property type="entry name" value="TRNA (GUANINE-N(1)-)-METHYLTRANSFERASE"/>
    <property type="match status" value="1"/>
</dbReference>
<dbReference type="Pfam" id="PF01746">
    <property type="entry name" value="tRNA_m1G_MT"/>
    <property type="match status" value="1"/>
</dbReference>
<dbReference type="PIRSF" id="PIRSF000386">
    <property type="entry name" value="tRNA_mtase"/>
    <property type="match status" value="1"/>
</dbReference>
<dbReference type="SUPFAM" id="SSF75217">
    <property type="entry name" value="alpha/beta knot"/>
    <property type="match status" value="1"/>
</dbReference>
<feature type="chain" id="PRO_0000060326" description="tRNA (guanine-N(1)-)-methyltransferase">
    <location>
        <begin position="1"/>
        <end position="243"/>
    </location>
</feature>
<feature type="binding site" evidence="1">
    <location>
        <position position="113"/>
    </location>
    <ligand>
        <name>S-adenosyl-L-methionine</name>
        <dbReference type="ChEBI" id="CHEBI:59789"/>
    </ligand>
</feature>
<feature type="binding site" evidence="1">
    <location>
        <begin position="133"/>
        <end position="138"/>
    </location>
    <ligand>
        <name>S-adenosyl-L-methionine</name>
        <dbReference type="ChEBI" id="CHEBI:59789"/>
    </ligand>
</feature>
<proteinExistence type="inferred from homology"/>
<gene>
    <name type="primary">trmD</name>
    <name type="ordered locus">BSU16030</name>
</gene>
<evidence type="ECO:0000250" key="1"/>
<evidence type="ECO:0000305" key="2"/>
<reference key="1">
    <citation type="journal article" date="1997" name="Nature">
        <title>The complete genome sequence of the Gram-positive bacterium Bacillus subtilis.</title>
        <authorList>
            <person name="Kunst F."/>
            <person name="Ogasawara N."/>
            <person name="Moszer I."/>
            <person name="Albertini A.M."/>
            <person name="Alloni G."/>
            <person name="Azevedo V."/>
            <person name="Bertero M.G."/>
            <person name="Bessieres P."/>
            <person name="Bolotin A."/>
            <person name="Borchert S."/>
            <person name="Borriss R."/>
            <person name="Boursier L."/>
            <person name="Brans A."/>
            <person name="Braun M."/>
            <person name="Brignell S.C."/>
            <person name="Bron S."/>
            <person name="Brouillet S."/>
            <person name="Bruschi C.V."/>
            <person name="Caldwell B."/>
            <person name="Capuano V."/>
            <person name="Carter N.M."/>
            <person name="Choi S.-K."/>
            <person name="Codani J.-J."/>
            <person name="Connerton I.F."/>
            <person name="Cummings N.J."/>
            <person name="Daniel R.A."/>
            <person name="Denizot F."/>
            <person name="Devine K.M."/>
            <person name="Duesterhoeft A."/>
            <person name="Ehrlich S.D."/>
            <person name="Emmerson P.T."/>
            <person name="Entian K.-D."/>
            <person name="Errington J."/>
            <person name="Fabret C."/>
            <person name="Ferrari E."/>
            <person name="Foulger D."/>
            <person name="Fritz C."/>
            <person name="Fujita M."/>
            <person name="Fujita Y."/>
            <person name="Fuma S."/>
            <person name="Galizzi A."/>
            <person name="Galleron N."/>
            <person name="Ghim S.-Y."/>
            <person name="Glaser P."/>
            <person name="Goffeau A."/>
            <person name="Golightly E.J."/>
            <person name="Grandi G."/>
            <person name="Guiseppi G."/>
            <person name="Guy B.J."/>
            <person name="Haga K."/>
            <person name="Haiech J."/>
            <person name="Harwood C.R."/>
            <person name="Henaut A."/>
            <person name="Hilbert H."/>
            <person name="Holsappel S."/>
            <person name="Hosono S."/>
            <person name="Hullo M.-F."/>
            <person name="Itaya M."/>
            <person name="Jones L.-M."/>
            <person name="Joris B."/>
            <person name="Karamata D."/>
            <person name="Kasahara Y."/>
            <person name="Klaerr-Blanchard M."/>
            <person name="Klein C."/>
            <person name="Kobayashi Y."/>
            <person name="Koetter P."/>
            <person name="Koningstein G."/>
            <person name="Krogh S."/>
            <person name="Kumano M."/>
            <person name="Kurita K."/>
            <person name="Lapidus A."/>
            <person name="Lardinois S."/>
            <person name="Lauber J."/>
            <person name="Lazarevic V."/>
            <person name="Lee S.-M."/>
            <person name="Levine A."/>
            <person name="Liu H."/>
            <person name="Masuda S."/>
            <person name="Mauel C."/>
            <person name="Medigue C."/>
            <person name="Medina N."/>
            <person name="Mellado R.P."/>
            <person name="Mizuno M."/>
            <person name="Moestl D."/>
            <person name="Nakai S."/>
            <person name="Noback M."/>
            <person name="Noone D."/>
            <person name="O'Reilly M."/>
            <person name="Ogawa K."/>
            <person name="Ogiwara A."/>
            <person name="Oudega B."/>
            <person name="Park S.-H."/>
            <person name="Parro V."/>
            <person name="Pohl T.M."/>
            <person name="Portetelle D."/>
            <person name="Porwollik S."/>
            <person name="Prescott A.M."/>
            <person name="Presecan E."/>
            <person name="Pujic P."/>
            <person name="Purnelle B."/>
            <person name="Rapoport G."/>
            <person name="Rey M."/>
            <person name="Reynolds S."/>
            <person name="Rieger M."/>
            <person name="Rivolta C."/>
            <person name="Rocha E."/>
            <person name="Roche B."/>
            <person name="Rose M."/>
            <person name="Sadaie Y."/>
            <person name="Sato T."/>
            <person name="Scanlan E."/>
            <person name="Schleich S."/>
            <person name="Schroeter R."/>
            <person name="Scoffone F."/>
            <person name="Sekiguchi J."/>
            <person name="Sekowska A."/>
            <person name="Seror S.J."/>
            <person name="Serror P."/>
            <person name="Shin B.-S."/>
            <person name="Soldo B."/>
            <person name="Sorokin A."/>
            <person name="Tacconi E."/>
            <person name="Takagi T."/>
            <person name="Takahashi H."/>
            <person name="Takemaru K."/>
            <person name="Takeuchi M."/>
            <person name="Tamakoshi A."/>
            <person name="Tanaka T."/>
            <person name="Terpstra P."/>
            <person name="Tognoni A."/>
            <person name="Tosato V."/>
            <person name="Uchiyama S."/>
            <person name="Vandenbol M."/>
            <person name="Vannier F."/>
            <person name="Vassarotti A."/>
            <person name="Viari A."/>
            <person name="Wambutt R."/>
            <person name="Wedler E."/>
            <person name="Wedler H."/>
            <person name="Weitzenegger T."/>
            <person name="Winters P."/>
            <person name="Wipat A."/>
            <person name="Yamamoto H."/>
            <person name="Yamane K."/>
            <person name="Yasumoto K."/>
            <person name="Yata K."/>
            <person name="Yoshida K."/>
            <person name="Yoshikawa H.-F."/>
            <person name="Zumstein E."/>
            <person name="Yoshikawa H."/>
            <person name="Danchin A."/>
        </authorList>
    </citation>
    <scope>NUCLEOTIDE SEQUENCE [LARGE SCALE GENOMIC DNA]</scope>
    <source>
        <strain>168</strain>
    </source>
</reference>
<accession>O31741</accession>
<name>TRMD_BACSU</name>
<keyword id="KW-0963">Cytoplasm</keyword>
<keyword id="KW-0489">Methyltransferase</keyword>
<keyword id="KW-1185">Reference proteome</keyword>
<keyword id="KW-0949">S-adenosyl-L-methionine</keyword>
<keyword id="KW-0808">Transferase</keyword>
<keyword id="KW-0819">tRNA processing</keyword>
<organism>
    <name type="scientific">Bacillus subtilis (strain 168)</name>
    <dbReference type="NCBI Taxonomy" id="224308"/>
    <lineage>
        <taxon>Bacteria</taxon>
        <taxon>Bacillati</taxon>
        <taxon>Bacillota</taxon>
        <taxon>Bacilli</taxon>
        <taxon>Bacillales</taxon>
        <taxon>Bacillaceae</taxon>
        <taxon>Bacillus</taxon>
    </lineage>
</organism>
<comment type="function">
    <text evidence="1">Specifically methylates guanosine-37 in various tRNAs.</text>
</comment>
<comment type="catalytic activity">
    <reaction>
        <text>guanosine(37) in tRNA + S-adenosyl-L-methionine = N(1)-methylguanosine(37) in tRNA + S-adenosyl-L-homocysteine + H(+)</text>
        <dbReference type="Rhea" id="RHEA:36899"/>
        <dbReference type="Rhea" id="RHEA-COMP:10145"/>
        <dbReference type="Rhea" id="RHEA-COMP:10147"/>
        <dbReference type="ChEBI" id="CHEBI:15378"/>
        <dbReference type="ChEBI" id="CHEBI:57856"/>
        <dbReference type="ChEBI" id="CHEBI:59789"/>
        <dbReference type="ChEBI" id="CHEBI:73542"/>
        <dbReference type="ChEBI" id="CHEBI:74269"/>
        <dbReference type="EC" id="2.1.1.228"/>
    </reaction>
</comment>
<comment type="subunit">
    <text evidence="1">Homodimer.</text>
</comment>
<comment type="subcellular location">
    <subcellularLocation>
        <location evidence="2">Cytoplasm</location>
    </subcellularLocation>
</comment>
<comment type="similarity">
    <text evidence="2">Belongs to the RNA methyltransferase TrmD family.</text>
</comment>
<sequence>MKIDFLTLFPEMFEGVLGSSILQKAQEKDAVQFQVVNFREYSDNKHNTVDDYPYGGGAGMVLKPQPVFDAVEDLTSKAAAAPRIILVCPQGERFTQKKAEQLAKEEHLLFICGHYEGYDERIREHLVTDEISIGDFVLTGGELPAMMIADSVVRLLPGVLGKEASHIEDSFSTGLLEHPHYTRPADYKGLKVPETLLSGNHAKIEEWRNKESIRRTYLRRPDLLKDHPLTEQQRKWISEWEKE</sequence>